<sequence length="508" mass="56129">MGLPWYRVHTVVLNDPGRLLSVHIMHTALVSGWAGSMALYELAVFDPSDPVLDPMWRQGMFVIPFMTRLGITNSWGGWSITGGTITNPGIWSYEGVAGAHIVFSGLCFLAAIWHWVYWDLEIFCDERTGKPSLDLPKIFGIHLFLSGVACFGFGAFHVTGLYGPGIWVSDPYGLTGKVQPVNPAWGVEGFDPFVPGGIASHHIAAGTLGILAGLFHLSVRPPQRLYKGLRMGNIETVLSSSIAAVFFAAFVVAGTMWYGSATTPIELFGPTRYQWDQGYFQQEIYRRVGTGLAENQSLSEAWSKIPEKLAFYDYIGNNPAKGGLFRAGSMDNGDGIAVGWLGHPIFRDKEGRELFVRRMPTFFETFPVVLVDGDGIVRADVPFRRAESKYSVEQVGVTVEFYGGELNGVSYSDPATVKKYARRAQLGEIFELDRATLKSDGVFRSSPRGWFTFGHASFALLFFFGHIWHGARTLFRDVFAGIDPDLDAQVEFGAFQKLGDPTTRRQVV</sequence>
<keyword id="KW-0148">Chlorophyll</keyword>
<keyword id="KW-0150">Chloroplast</keyword>
<keyword id="KW-0157">Chromophore</keyword>
<keyword id="KW-0472">Membrane</keyword>
<keyword id="KW-0602">Photosynthesis</keyword>
<keyword id="KW-0604">Photosystem II</keyword>
<keyword id="KW-0934">Plastid</keyword>
<keyword id="KW-0793">Thylakoid</keyword>
<keyword id="KW-0812">Transmembrane</keyword>
<keyword id="KW-1133">Transmembrane helix</keyword>
<name>PSBB_PLAOC</name>
<evidence type="ECO:0000255" key="1">
    <source>
        <dbReference type="HAMAP-Rule" id="MF_01495"/>
    </source>
</evidence>
<dbReference type="EMBL" id="DQ923116">
    <property type="protein sequence ID" value="ABI49805.1"/>
    <property type="molecule type" value="Genomic_DNA"/>
</dbReference>
<dbReference type="RefSeq" id="YP_740591.1">
    <property type="nucleotide sequence ID" value="NC_008335.1"/>
</dbReference>
<dbReference type="SMR" id="Q09G20"/>
<dbReference type="GeneID" id="4271254"/>
<dbReference type="GO" id="GO:0009535">
    <property type="term" value="C:chloroplast thylakoid membrane"/>
    <property type="evidence" value="ECO:0007669"/>
    <property type="project" value="UniProtKB-SubCell"/>
</dbReference>
<dbReference type="GO" id="GO:0009523">
    <property type="term" value="C:photosystem II"/>
    <property type="evidence" value="ECO:0007669"/>
    <property type="project" value="UniProtKB-KW"/>
</dbReference>
<dbReference type="GO" id="GO:0016168">
    <property type="term" value="F:chlorophyll binding"/>
    <property type="evidence" value="ECO:0007669"/>
    <property type="project" value="UniProtKB-UniRule"/>
</dbReference>
<dbReference type="GO" id="GO:0045156">
    <property type="term" value="F:electron transporter, transferring electrons within the cyclic electron transport pathway of photosynthesis activity"/>
    <property type="evidence" value="ECO:0007669"/>
    <property type="project" value="InterPro"/>
</dbReference>
<dbReference type="GO" id="GO:0009772">
    <property type="term" value="P:photosynthetic electron transport in photosystem II"/>
    <property type="evidence" value="ECO:0007669"/>
    <property type="project" value="InterPro"/>
</dbReference>
<dbReference type="FunFam" id="3.10.680.10:FF:000001">
    <property type="entry name" value="Photosystem II CP47 reaction center protein"/>
    <property type="match status" value="1"/>
</dbReference>
<dbReference type="Gene3D" id="3.10.680.10">
    <property type="entry name" value="Photosystem II CP47 reaction center protein"/>
    <property type="match status" value="1"/>
</dbReference>
<dbReference type="HAMAP" id="MF_01495">
    <property type="entry name" value="PSII_PsbB_CP47"/>
    <property type="match status" value="1"/>
</dbReference>
<dbReference type="InterPro" id="IPR000932">
    <property type="entry name" value="PS_antenna-like"/>
</dbReference>
<dbReference type="InterPro" id="IPR036001">
    <property type="entry name" value="PS_II_antenna-like_sf"/>
</dbReference>
<dbReference type="InterPro" id="IPR017486">
    <property type="entry name" value="PSII_PsbB"/>
</dbReference>
<dbReference type="NCBIfam" id="TIGR03039">
    <property type="entry name" value="PS_II_CP47"/>
    <property type="match status" value="1"/>
</dbReference>
<dbReference type="PANTHER" id="PTHR33180">
    <property type="entry name" value="PHOTOSYSTEM II CP43 REACTION CENTER PROTEIN"/>
    <property type="match status" value="1"/>
</dbReference>
<dbReference type="PANTHER" id="PTHR33180:SF35">
    <property type="entry name" value="PHOTOSYSTEM II CP47 REACTION CENTER PROTEIN"/>
    <property type="match status" value="1"/>
</dbReference>
<dbReference type="Pfam" id="PF00421">
    <property type="entry name" value="PSII"/>
    <property type="match status" value="1"/>
</dbReference>
<dbReference type="SUPFAM" id="SSF161077">
    <property type="entry name" value="Photosystem II antenna protein-like"/>
    <property type="match status" value="1"/>
</dbReference>
<feature type="chain" id="PRO_0000359857" description="Photosystem II CP47 reaction center protein">
    <location>
        <begin position="1"/>
        <end position="508"/>
    </location>
</feature>
<feature type="transmembrane region" description="Helical" evidence="1">
    <location>
        <begin position="21"/>
        <end position="36"/>
    </location>
</feature>
<feature type="transmembrane region" description="Helical" evidence="1">
    <location>
        <begin position="101"/>
        <end position="115"/>
    </location>
</feature>
<feature type="transmembrane region" description="Helical" evidence="1">
    <location>
        <begin position="140"/>
        <end position="156"/>
    </location>
</feature>
<feature type="transmembrane region" description="Helical" evidence="1">
    <location>
        <begin position="203"/>
        <end position="218"/>
    </location>
</feature>
<feature type="transmembrane region" description="Helical" evidence="1">
    <location>
        <begin position="237"/>
        <end position="252"/>
    </location>
</feature>
<feature type="transmembrane region" description="Helical" evidence="1">
    <location>
        <begin position="457"/>
        <end position="472"/>
    </location>
</feature>
<geneLocation type="chloroplast"/>
<protein>
    <recommendedName>
        <fullName evidence="1">Photosystem II CP47 reaction center protein</fullName>
    </recommendedName>
    <alternativeName>
        <fullName evidence="1">PSII 47 kDa protein</fullName>
    </alternativeName>
    <alternativeName>
        <fullName evidence="1">Protein CP-47</fullName>
    </alternativeName>
</protein>
<reference key="1">
    <citation type="journal article" date="2006" name="BMC Plant Biol.">
        <title>Rapid and accurate pyrosequencing of angiosperm plastid genomes.</title>
        <authorList>
            <person name="Moore M.J."/>
            <person name="Dhingra A."/>
            <person name="Soltis P.S."/>
            <person name="Shaw R."/>
            <person name="Farmerie W.G."/>
            <person name="Folta K.M."/>
            <person name="Soltis D.E."/>
        </authorList>
    </citation>
    <scope>NUCLEOTIDE SEQUENCE [LARGE SCALE GENOMIC DNA]</scope>
</reference>
<proteinExistence type="inferred from homology"/>
<accession>Q09G20</accession>
<organism>
    <name type="scientific">Platanus occidentalis</name>
    <name type="common">Sycamore</name>
    <name type="synonym">American plane tree</name>
    <dbReference type="NCBI Taxonomy" id="4403"/>
    <lineage>
        <taxon>Eukaryota</taxon>
        <taxon>Viridiplantae</taxon>
        <taxon>Streptophyta</taxon>
        <taxon>Embryophyta</taxon>
        <taxon>Tracheophyta</taxon>
        <taxon>Spermatophyta</taxon>
        <taxon>Magnoliopsida</taxon>
        <taxon>Proteales</taxon>
        <taxon>Platanaceae</taxon>
        <taxon>Platanus</taxon>
    </lineage>
</organism>
<gene>
    <name evidence="1" type="primary">psbB</name>
</gene>
<comment type="function">
    <text evidence="1">One of the components of the core complex of photosystem II (PSII). It binds chlorophyll and helps catalyze the primary light-induced photochemical processes of PSII. PSII is a light-driven water:plastoquinone oxidoreductase, using light energy to abstract electrons from H(2)O, generating O(2) and a proton gradient subsequently used for ATP formation.</text>
</comment>
<comment type="cofactor">
    <text evidence="1">Binds multiple chlorophylls. PSII binds additional chlorophylls, carotenoids and specific lipids.</text>
</comment>
<comment type="subunit">
    <text evidence="1">PSII is composed of 1 copy each of membrane proteins PsbA, PsbB, PsbC, PsbD, PsbE, PsbF, PsbH, PsbI, PsbJ, PsbK, PsbL, PsbM, PsbT, PsbX, PsbY, PsbZ, Psb30/Ycf12, at least 3 peripheral proteins of the oxygen-evolving complex and a large number of cofactors. It forms dimeric complexes.</text>
</comment>
<comment type="subcellular location">
    <subcellularLocation>
        <location evidence="1">Plastid</location>
        <location evidence="1">Chloroplast thylakoid membrane</location>
        <topology evidence="1">Multi-pass membrane protein</topology>
    </subcellularLocation>
</comment>
<comment type="similarity">
    <text evidence="1">Belongs to the PsbB/PsbC family. PsbB subfamily.</text>
</comment>